<proteinExistence type="inferred from homology"/>
<keyword id="KW-1015">Disulfide bond</keyword>
<keyword id="KW-0325">Glycoprotein</keyword>
<keyword id="KW-0326">Glycosidase</keyword>
<keyword id="KW-0378">Hydrolase</keyword>
<keyword id="KW-1185">Reference proteome</keyword>
<keyword id="KW-0964">Secreted</keyword>
<keyword id="KW-0732">Signal</keyword>
<reference key="1">
    <citation type="journal article" date="2005" name="Nature">
        <title>Genome sequencing and analysis of Aspergillus oryzae.</title>
        <authorList>
            <person name="Machida M."/>
            <person name="Asai K."/>
            <person name="Sano M."/>
            <person name="Tanaka T."/>
            <person name="Kumagai T."/>
            <person name="Terai G."/>
            <person name="Kusumoto K."/>
            <person name="Arima T."/>
            <person name="Akita O."/>
            <person name="Kashiwagi Y."/>
            <person name="Abe K."/>
            <person name="Gomi K."/>
            <person name="Horiuchi H."/>
            <person name="Kitamoto K."/>
            <person name="Kobayashi T."/>
            <person name="Takeuchi M."/>
            <person name="Denning D.W."/>
            <person name="Galagan J.E."/>
            <person name="Nierman W.C."/>
            <person name="Yu J."/>
            <person name="Archer D.B."/>
            <person name="Bennett J.W."/>
            <person name="Bhatnagar D."/>
            <person name="Cleveland T.E."/>
            <person name="Fedorova N.D."/>
            <person name="Gotoh O."/>
            <person name="Horikawa H."/>
            <person name="Hosoyama A."/>
            <person name="Ichinomiya M."/>
            <person name="Igarashi R."/>
            <person name="Iwashita K."/>
            <person name="Juvvadi P.R."/>
            <person name="Kato M."/>
            <person name="Kato Y."/>
            <person name="Kin T."/>
            <person name="Kokubun A."/>
            <person name="Maeda H."/>
            <person name="Maeyama N."/>
            <person name="Maruyama J."/>
            <person name="Nagasaki H."/>
            <person name="Nakajima T."/>
            <person name="Oda K."/>
            <person name="Okada K."/>
            <person name="Paulsen I."/>
            <person name="Sakamoto K."/>
            <person name="Sawano T."/>
            <person name="Takahashi M."/>
            <person name="Takase K."/>
            <person name="Terabayashi Y."/>
            <person name="Wortman J.R."/>
            <person name="Yamada O."/>
            <person name="Yamagata Y."/>
            <person name="Anazawa H."/>
            <person name="Hata Y."/>
            <person name="Koide Y."/>
            <person name="Komori T."/>
            <person name="Koyama Y."/>
            <person name="Minetoki T."/>
            <person name="Suharnan S."/>
            <person name="Tanaka A."/>
            <person name="Isono K."/>
            <person name="Kuhara S."/>
            <person name="Ogasawara N."/>
            <person name="Kikuchi H."/>
        </authorList>
    </citation>
    <scope>NUCLEOTIDE SEQUENCE [LARGE SCALE GENOMIC DNA]</scope>
    <source>
        <strain>ATCC 42149 / RIB 40</strain>
    </source>
</reference>
<organism>
    <name type="scientific">Aspergillus oryzae (strain ATCC 42149 / RIB 40)</name>
    <name type="common">Yellow koji mold</name>
    <dbReference type="NCBI Taxonomy" id="510516"/>
    <lineage>
        <taxon>Eukaryota</taxon>
        <taxon>Fungi</taxon>
        <taxon>Dikarya</taxon>
        <taxon>Ascomycota</taxon>
        <taxon>Pezizomycotina</taxon>
        <taxon>Eurotiomycetes</taxon>
        <taxon>Eurotiomycetidae</taxon>
        <taxon>Eurotiales</taxon>
        <taxon>Aspergillaceae</taxon>
        <taxon>Aspergillus</taxon>
        <taxon>Aspergillus subgen. Circumdati</taxon>
    </lineage>
</organism>
<dbReference type="EC" id="3.2.1.22"/>
<dbReference type="EMBL" id="BA000050">
    <property type="protein sequence ID" value="BAE58368.1"/>
    <property type="molecule type" value="Genomic_DNA"/>
</dbReference>
<dbReference type="RefSeq" id="XP_001820370.1">
    <property type="nucleotide sequence ID" value="XM_001820318.2"/>
</dbReference>
<dbReference type="SMR" id="Q2UJ97"/>
<dbReference type="STRING" id="510516.Q2UJ97"/>
<dbReference type="CAZy" id="GH27">
    <property type="family name" value="Glycoside Hydrolase Family 27"/>
</dbReference>
<dbReference type="GlyCosmos" id="Q2UJ97">
    <property type="glycosylation" value="6 sites, No reported glycans"/>
</dbReference>
<dbReference type="EnsemblFungi" id="BAE58368">
    <property type="protein sequence ID" value="BAE58368"/>
    <property type="gene ID" value="AO090003001305"/>
</dbReference>
<dbReference type="GeneID" id="5992593"/>
<dbReference type="KEGG" id="aor:AO090003001305"/>
<dbReference type="VEuPathDB" id="FungiDB:AO090003001305"/>
<dbReference type="HOGENOM" id="CLU_013093_2_2_1"/>
<dbReference type="OMA" id="MTPTMGW"/>
<dbReference type="OrthoDB" id="36816at5052"/>
<dbReference type="Proteomes" id="UP000006564">
    <property type="component" value="Chromosome 2"/>
</dbReference>
<dbReference type="GO" id="GO:0005576">
    <property type="term" value="C:extracellular region"/>
    <property type="evidence" value="ECO:0007669"/>
    <property type="project" value="UniProtKB-SubCell"/>
</dbReference>
<dbReference type="GO" id="GO:0004557">
    <property type="term" value="F:alpha-galactosidase activity"/>
    <property type="evidence" value="ECO:0007669"/>
    <property type="project" value="UniProtKB-EC"/>
</dbReference>
<dbReference type="GO" id="GO:0005975">
    <property type="term" value="P:carbohydrate metabolic process"/>
    <property type="evidence" value="ECO:0007669"/>
    <property type="project" value="InterPro"/>
</dbReference>
<dbReference type="CDD" id="cd14792">
    <property type="entry name" value="GH27"/>
    <property type="match status" value="1"/>
</dbReference>
<dbReference type="FunFam" id="2.60.40.1180:FF:000049">
    <property type="entry name" value="Alpha-galactosidase"/>
    <property type="match status" value="1"/>
</dbReference>
<dbReference type="Gene3D" id="3.20.20.70">
    <property type="entry name" value="Aldolase class I"/>
    <property type="match status" value="1"/>
</dbReference>
<dbReference type="Gene3D" id="2.60.40.1180">
    <property type="entry name" value="Golgi alpha-mannosidase II"/>
    <property type="match status" value="1"/>
</dbReference>
<dbReference type="InterPro" id="IPR013785">
    <property type="entry name" value="Aldolase_TIM"/>
</dbReference>
<dbReference type="InterPro" id="IPR002241">
    <property type="entry name" value="Glyco_hydro_27"/>
</dbReference>
<dbReference type="InterPro" id="IPR000111">
    <property type="entry name" value="Glyco_hydro_27/36_CS"/>
</dbReference>
<dbReference type="InterPro" id="IPR013780">
    <property type="entry name" value="Glyco_hydro_b"/>
</dbReference>
<dbReference type="InterPro" id="IPR017853">
    <property type="entry name" value="Glycoside_hydrolase_SF"/>
</dbReference>
<dbReference type="InterPro" id="IPR041233">
    <property type="entry name" value="Melibiase_C"/>
</dbReference>
<dbReference type="PANTHER" id="PTHR11452:SF61">
    <property type="entry name" value="ALPHA-GALACTOSIDASE B-RELATED"/>
    <property type="match status" value="1"/>
</dbReference>
<dbReference type="PANTHER" id="PTHR11452">
    <property type="entry name" value="ALPHA-GALACTOSIDASE/ALPHA-N-ACETYLGALACTOSAMINIDASE"/>
    <property type="match status" value="1"/>
</dbReference>
<dbReference type="Pfam" id="PF16499">
    <property type="entry name" value="Melibiase_2"/>
    <property type="match status" value="2"/>
</dbReference>
<dbReference type="Pfam" id="PF17801">
    <property type="entry name" value="Melibiase_C"/>
    <property type="match status" value="1"/>
</dbReference>
<dbReference type="PRINTS" id="PR00740">
    <property type="entry name" value="GLHYDRLASE27"/>
</dbReference>
<dbReference type="SUPFAM" id="SSF51445">
    <property type="entry name" value="(Trans)glycosidases"/>
    <property type="match status" value="1"/>
</dbReference>
<dbReference type="SUPFAM" id="SSF51011">
    <property type="entry name" value="Glycosyl hydrolase domain"/>
    <property type="match status" value="1"/>
</dbReference>
<dbReference type="PROSITE" id="PS00512">
    <property type="entry name" value="ALPHA_GALACTOSIDASE"/>
    <property type="match status" value="1"/>
</dbReference>
<name>AGALB_ASPOR</name>
<feature type="signal peptide" evidence="2">
    <location>
        <begin position="1"/>
        <end position="19"/>
    </location>
</feature>
<feature type="chain" id="PRO_0000393219" description="Probable alpha-galactosidase B">
    <location>
        <begin position="20"/>
        <end position="442"/>
    </location>
</feature>
<feature type="active site" description="Nucleophile" evidence="1">
    <location>
        <position position="152"/>
    </location>
</feature>
<feature type="active site" description="Proton donor" evidence="1">
    <location>
        <position position="246"/>
    </location>
</feature>
<feature type="binding site" evidence="1">
    <location>
        <begin position="224"/>
        <end position="228"/>
    </location>
    <ligand>
        <name>substrate</name>
    </ligand>
</feature>
<feature type="glycosylation site" description="N-linked (GlcNAc...) asparagine" evidence="2">
    <location>
        <position position="159"/>
    </location>
</feature>
<feature type="glycosylation site" description="N-linked (GlcNAc...) asparagine" evidence="2">
    <location>
        <position position="173"/>
    </location>
</feature>
<feature type="glycosylation site" description="N-linked (GlcNAc...) asparagine" evidence="2">
    <location>
        <position position="179"/>
    </location>
</feature>
<feature type="glycosylation site" description="N-linked (GlcNAc...) asparagine" evidence="2">
    <location>
        <position position="215"/>
    </location>
</feature>
<feature type="glycosylation site" description="N-linked (GlcNAc...) asparagine" evidence="2">
    <location>
        <position position="235"/>
    </location>
</feature>
<feature type="glycosylation site" description="N-linked (GlcNAc...) asparagine" evidence="2">
    <location>
        <position position="285"/>
    </location>
</feature>
<feature type="disulfide bond" evidence="1">
    <location>
        <begin position="42"/>
        <end position="74"/>
    </location>
</feature>
<feature type="disulfide bond" evidence="1">
    <location>
        <begin position="124"/>
        <end position="154"/>
    </location>
</feature>
<evidence type="ECO:0000250" key="1"/>
<evidence type="ECO:0000255" key="2"/>
<evidence type="ECO:0000305" key="3"/>
<accession>Q2UJ97</accession>
<protein>
    <recommendedName>
        <fullName>Probable alpha-galactosidase B</fullName>
        <ecNumber>3.2.1.22</ecNumber>
    </recommendedName>
    <alternativeName>
        <fullName>Melibiase B</fullName>
    </alternativeName>
</protein>
<sequence length="442" mass="48507">MQRYISLSVSLSLLSGANALVRPDGVGRLPALGWNTWNAFGCDIDASKVLTAAEETINLGLKDAGYEYINIDDCWSVKSGRDPNTKRIIPDSAKFPDGISGVASKIHDLGLKVGIYSSAGTETCAGYPASLGYEKIDAESFAEWGIDYLKYDNCGVPTNWTDTYTHCVPDNSNGSKFPNGTCPDISNPAPTAYDWSSSNTAQRYNAMRDALLGVNRTILYSLCEWGQADVNTWGNGTGNSWRTTGDITPDWSRIVEIANENSFLMNYADFWGYPDPDMLEVGNGNLTLEENRAHFALWAAMKSPLIIGTALDSINEEHLAILKNKPLLSFHQDPVIGRPAYPYKWGYNPDWTFDPAHPAEYWSGPSSTLGGTLVLMFNSEDSAKHRTAVWSEIPELKDSAEKGSGYRVTEIWTGEDLGCVKDQYDVELQSHDIAALVVGESC</sequence>
<gene>
    <name type="primary">aglB</name>
    <name type="ORF">AO090003001305</name>
</gene>
<comment type="function">
    <text evidence="1">Hydrolyzes a variety of simple alpha-D-galactoside as well as more complex molecules such as oligosaccharides and polysaccharides.</text>
</comment>
<comment type="catalytic activity">
    <reaction>
        <text>Hydrolysis of terminal, non-reducing alpha-D-galactose residues in alpha-D-galactosides, including galactose oligosaccharides, galactomannans and galactolipids.</text>
        <dbReference type="EC" id="3.2.1.22"/>
    </reaction>
</comment>
<comment type="subcellular location">
    <subcellularLocation>
        <location evidence="3">Secreted</location>
    </subcellularLocation>
</comment>
<comment type="similarity">
    <text evidence="3">Belongs to the glycosyl hydrolase 27 family.</text>
</comment>